<proteinExistence type="evidence at protein level"/>
<comment type="function">
    <text evidence="1 3 4 5">Structural component of specialized membrane microdomains known as tetraspanin-enriched microdomains (TERMs), which act as platforms for receptor clustering and signaling. Participates thereby in diverse biological functions such as cell signal transduction, adhesion, migration and protein trafficking (PubMed:10891477). Upon ligand binding, two signaling pathways are activated, one acting through phosphorylation by LYN leading to cell death or a survival pathway with activation of GSK3B (By similarity). Plays an essential role for clustering of integrin ITGA4/ITGB1 and promotes its mobility in the plasma membrane of B-cells. In turn, participates in ITGA4/ITGB1 integrin-mediated antiapoptotic signaling through AKT (PubMed:23150881). Also plays a role in the migration of dendritic cells and neutrophils to draining lymph nodes, as well as in their integrin-mediated adhesion (PubMed:23420539, PubMed:26566675). Negatively regulates IL-6 responses through direct interaction with SOCS3 thereby preventing constitutive IL-6 signaling (By similarity). Alternatively, inhibition of IL-6 signaling can also occur via interaction and stabilization of DECTIN1/CLEC7A at the cell membrane to inhibit its ability to promote the production of IL-6 (By similarity).</text>
</comment>
<comment type="subunit">
    <text evidence="1">Interacts with SCIMP. Interacts with SOCS3. Interacts with DECTIN1/CLEC7A.</text>
</comment>
<comment type="subcellular location">
    <subcellularLocation>
        <location evidence="1">Cell membrane</location>
        <topology evidence="1">Multi-pass membrane protein</topology>
    </subcellularLocation>
</comment>
<comment type="PTM">
    <text evidence="1">Tyrosine phosphorylated; leading to activation of downstream signaling pathways.</text>
</comment>
<comment type="disruption phenotype">
    <text evidence="3 4 5 6 7">Cd37-deficient mice develop normally, with unaltered numbers of lymphoid and myeloid cells in lymphoid organs (PubMed:10891477). However, Cd37-deficiency predisposes mice to develop spontaneous development of aggressive B-cell lymphoma (PubMed:26784544). Cd37-deleted B-cells are substantially impaired in their capacity to roll on integrin ITGA4 ligands compared to wild-type B-cells (PubMed:23150881). Migration, adhesion and cell spreading is impaired in cd37-deleted dendritic cells leading to a failure to induce antigen-specific IFN-gamma-secreting T-cells (PubMed:23420539). Absence of CD37 also impairs the ability of neutrophils to respond to chemotactic cues in the interstitium (PubMed:26566675).</text>
</comment>
<comment type="similarity">
    <text evidence="8">Belongs to the tetraspanin (TM4SF) family.</text>
</comment>
<reference key="1">
    <citation type="journal article" date="1996" name="Mol. Immunol.">
        <title>Characterisation of mouse CD37: cDNA and genomic cloning.</title>
        <authorList>
            <person name="Tomlinson M.G."/>
            <person name="Wright M.D."/>
        </authorList>
    </citation>
    <scope>NUCLEOTIDE SEQUENCE [MRNA]</scope>
    <source>
        <strain>129/Sv</strain>
        <tissue>Liver</tissue>
    </source>
</reference>
<reference key="2">
    <citation type="journal article" date="2004" name="Genome Res.">
        <title>The status, quality, and expansion of the NIH full-length cDNA project: the Mammalian Gene Collection (MGC).</title>
        <authorList>
            <consortium name="The MGC Project Team"/>
        </authorList>
    </citation>
    <scope>NUCLEOTIDE SEQUENCE [LARGE SCALE MRNA]</scope>
    <source>
        <strain>Czech II</strain>
        <tissue>Mammary gland</tissue>
    </source>
</reference>
<reference key="3">
    <citation type="journal article" date="2000" name="Mol. Cell. Biol.">
        <title>Targeted inactivation of the tetraspanin CD37 impairs T-cell-dependent B-cell response under suboptimal costimulatory conditions.</title>
        <authorList>
            <person name="Knobeloch K.P."/>
            <person name="Wright M.D."/>
            <person name="Ochsenbein A.F."/>
            <person name="Liesenfeld O."/>
            <person name="Loehler J."/>
            <person name="Zinkernagel R.M."/>
            <person name="Horak I."/>
            <person name="Orinska Z."/>
        </authorList>
    </citation>
    <scope>FUNCTION</scope>
    <scope>DISRUPTION PHENOTYPE</scope>
</reference>
<reference key="4">
    <citation type="journal article" date="2010" name="Cell">
        <title>A tissue-specific atlas of mouse protein phosphorylation and expression.</title>
        <authorList>
            <person name="Huttlin E.L."/>
            <person name="Jedrychowski M.P."/>
            <person name="Elias J.E."/>
            <person name="Goswami T."/>
            <person name="Rad R."/>
            <person name="Beausoleil S.A."/>
            <person name="Villen J."/>
            <person name="Haas W."/>
            <person name="Sowa M.E."/>
            <person name="Gygi S.P."/>
        </authorList>
    </citation>
    <scope>IDENTIFICATION BY MASS SPECTROMETRY [LARGE SCALE ANALYSIS]</scope>
    <source>
        <tissue>Spleen</tissue>
    </source>
</reference>
<reference key="5">
    <citation type="journal article" date="2012" name="Sci. Signal.">
        <title>The tetraspanin CD37 orchestrates the alpha(4)beta(1) integrin-Akt signaling axis and supports long-lived plasma cell survival.</title>
        <authorList>
            <person name="van Spriel A.B."/>
            <person name="de Keijzer S."/>
            <person name="van der Schaaf A."/>
            <person name="Gartlan K.H."/>
            <person name="Sofi M."/>
            <person name="Light A."/>
            <person name="Linssen P.C."/>
            <person name="Boezeman J.B."/>
            <person name="Zuidscherwoude M."/>
            <person name="Reinieren-Beeren I."/>
            <person name="Cambi A."/>
            <person name="Mackay F."/>
            <person name="Tarlinton D.M."/>
            <person name="Figdor C.G."/>
            <person name="Wright M.D."/>
        </authorList>
    </citation>
    <scope>FUNCTION</scope>
    <scope>DISRUPTION PHENOTYPE</scope>
</reference>
<reference key="6">
    <citation type="journal article" date="2013" name="Eur. J. Immunol.">
        <title>Tetraspanin CD37 contributes to the initiation of cellular immunity by promoting dendritic cell migration.</title>
        <authorList>
            <person name="Gartlan K.H."/>
            <person name="Wee J.L."/>
            <person name="Demaria M.C."/>
            <person name="Nastovska R."/>
            <person name="Chang T.M."/>
            <person name="Jones E.L."/>
            <person name="Apostolopoulos V."/>
            <person name="Pietersz G.A."/>
            <person name="Hickey M.J."/>
            <person name="van Spriel A.B."/>
            <person name="Wright M.D."/>
        </authorList>
    </citation>
    <scope>FUNCTION</scope>
    <scope>DISRUPTION PHENOTYPE</scope>
</reference>
<reference key="7">
    <citation type="journal article" date="2015" name="J. Immunol.">
        <title>Tetraspanin CD37 Regulates beta2 Integrin-Mediated Adhesion and Migration in Neutrophils.</title>
        <authorList>
            <person name="Wee J.L."/>
            <person name="Schulze K.E."/>
            <person name="Jones E.L."/>
            <person name="Yeung L."/>
            <person name="Cheng Q."/>
            <person name="Pereira C.F."/>
            <person name="Costin A."/>
            <person name="Ramm G."/>
            <person name="van Spriel A.B."/>
            <person name="Hickey M.J."/>
            <person name="Wright M.D."/>
        </authorList>
    </citation>
    <scope>FUNCTION</scope>
    <scope>DISRUPTION PHENOTYPE</scope>
</reference>
<reference key="8">
    <citation type="journal article" date="2016" name="J. Clin. Invest.">
        <title>Tetraspanin CD37 protects against the development of B cell lymphoma.</title>
        <authorList>
            <person name="de Winde C.M."/>
            <person name="Veenbergen S."/>
            <person name="Young K.H."/>
            <person name="Xu-Monette Z.Y."/>
            <person name="Wang X.X."/>
            <person name="Xia Y."/>
            <person name="Jabbar K.J."/>
            <person name="van den Brand M."/>
            <person name="van der Schaaf A."/>
            <person name="Elfrink S."/>
            <person name="van Houdt I.S."/>
            <person name="Gijbels M.J."/>
            <person name="van de Loo F.A."/>
            <person name="Bennink M.B."/>
            <person name="Hebeda K.M."/>
            <person name="Groenen P.J."/>
            <person name="van Krieken J.H."/>
            <person name="Figdor C.G."/>
            <person name="van Spriel A.B."/>
        </authorList>
    </citation>
    <scope>DISRUPTION PHENOTYPE</scope>
</reference>
<keyword id="KW-1003">Cell membrane</keyword>
<keyword id="KW-0325">Glycoprotein</keyword>
<keyword id="KW-0472">Membrane</keyword>
<keyword id="KW-1185">Reference proteome</keyword>
<keyword id="KW-0812">Transmembrane</keyword>
<keyword id="KW-1133">Transmembrane helix</keyword>
<evidence type="ECO:0000250" key="1">
    <source>
        <dbReference type="UniProtKB" id="P11049"/>
    </source>
</evidence>
<evidence type="ECO:0000255" key="2"/>
<evidence type="ECO:0000269" key="3">
    <source>
    </source>
</evidence>
<evidence type="ECO:0000269" key="4">
    <source>
    </source>
</evidence>
<evidence type="ECO:0000269" key="5">
    <source>
    </source>
</evidence>
<evidence type="ECO:0000269" key="6">
    <source>
    </source>
</evidence>
<evidence type="ECO:0000269" key="7">
    <source>
    </source>
</evidence>
<evidence type="ECO:0000305" key="8"/>
<accession>Q61470</accession>
<protein>
    <recommendedName>
        <fullName>Leukocyte antigen CD37</fullName>
    </recommendedName>
    <cdAntigenName>CD37</cdAntigenName>
</protein>
<sequence>MSAQESCLSLIKYFLFVFNLFFFVLGGLIFCFGTWILIDKTSFVSFVGLSFVPLQTWSKVLAVSGVLTMALALLGCVGALKELRCLLGLYFGMLLLLFATQITLGILISTQRVRLERRVQELVLRTIQSYRTNPDETAAEESWDYAQFQLRCCGWQSPRDWNKAQMLKANESEEPFVPCSCYNSTATNDSTVFDKLFFSQLSRLGPRAKLRQTADICALPAKAHIYREGCAQSLQKWLHNNIISIVGICLGVGLLELGFMTLSIFLCRNLDHVYDRLARYR</sequence>
<feature type="chain" id="PRO_0000219210" description="Leukocyte antigen CD37">
    <location>
        <begin position="1"/>
        <end position="281"/>
    </location>
</feature>
<feature type="topological domain" description="Cytoplasmic" evidence="2">
    <location>
        <begin position="1"/>
        <end position="17"/>
    </location>
</feature>
<feature type="transmembrane region" description="Helical" evidence="2">
    <location>
        <begin position="18"/>
        <end position="38"/>
    </location>
</feature>
<feature type="topological domain" description="Extracellular" evidence="2">
    <location>
        <begin position="39"/>
        <end position="59"/>
    </location>
</feature>
<feature type="transmembrane region" description="Helical" evidence="2">
    <location>
        <begin position="60"/>
        <end position="74"/>
    </location>
</feature>
<feature type="topological domain" description="Cytoplasmic" evidence="2">
    <location>
        <begin position="75"/>
        <end position="85"/>
    </location>
</feature>
<feature type="transmembrane region" description="Helical" evidence="2">
    <location>
        <begin position="86"/>
        <end position="111"/>
    </location>
</feature>
<feature type="topological domain" description="Extracellular" evidence="2">
    <location>
        <begin position="112"/>
        <end position="241"/>
    </location>
</feature>
<feature type="transmembrane region" description="Helical" evidence="2">
    <location>
        <begin position="242"/>
        <end position="266"/>
    </location>
</feature>
<feature type="topological domain" description="Cytoplasmic" evidence="2">
    <location>
        <begin position="267"/>
        <end position="281"/>
    </location>
</feature>
<feature type="glycosylation site" description="N-linked (GlcNAc...) asparagine" evidence="2">
    <location>
        <position position="170"/>
    </location>
</feature>
<feature type="glycosylation site" description="N-linked (GlcNAc...) asparagine" evidence="2">
    <location>
        <position position="183"/>
    </location>
</feature>
<feature type="glycosylation site" description="N-linked (GlcNAc...) asparagine" evidence="2">
    <location>
        <position position="188"/>
    </location>
</feature>
<name>CD37_MOUSE</name>
<gene>
    <name type="primary">Cd37</name>
</gene>
<organism>
    <name type="scientific">Mus musculus</name>
    <name type="common">Mouse</name>
    <dbReference type="NCBI Taxonomy" id="10090"/>
    <lineage>
        <taxon>Eukaryota</taxon>
        <taxon>Metazoa</taxon>
        <taxon>Chordata</taxon>
        <taxon>Craniata</taxon>
        <taxon>Vertebrata</taxon>
        <taxon>Euteleostomi</taxon>
        <taxon>Mammalia</taxon>
        <taxon>Eutheria</taxon>
        <taxon>Euarchontoglires</taxon>
        <taxon>Glires</taxon>
        <taxon>Rodentia</taxon>
        <taxon>Myomorpha</taxon>
        <taxon>Muroidea</taxon>
        <taxon>Muridae</taxon>
        <taxon>Murinae</taxon>
        <taxon>Mus</taxon>
        <taxon>Mus</taxon>
    </lineage>
</organism>
<dbReference type="EMBL" id="U18372">
    <property type="protein sequence ID" value="AAB39500.1"/>
    <property type="molecule type" value="Genomic_DNA"/>
</dbReference>
<dbReference type="EMBL" id="U18367">
    <property type="protein sequence ID" value="AAB39500.1"/>
    <property type="status" value="JOINED"/>
    <property type="molecule type" value="Genomic_DNA"/>
</dbReference>
<dbReference type="EMBL" id="U18368">
    <property type="protein sequence ID" value="AAB39500.1"/>
    <property type="status" value="JOINED"/>
    <property type="molecule type" value="Genomic_DNA"/>
</dbReference>
<dbReference type="EMBL" id="U18369">
    <property type="protein sequence ID" value="AAB39500.1"/>
    <property type="status" value="JOINED"/>
    <property type="molecule type" value="Genomic_DNA"/>
</dbReference>
<dbReference type="EMBL" id="U18370">
    <property type="protein sequence ID" value="AAB39500.1"/>
    <property type="status" value="JOINED"/>
    <property type="molecule type" value="Genomic_DNA"/>
</dbReference>
<dbReference type="EMBL" id="U18371">
    <property type="protein sequence ID" value="AAB39500.1"/>
    <property type="status" value="JOINED"/>
    <property type="molecule type" value="Genomic_DNA"/>
</dbReference>
<dbReference type="EMBL" id="BC019402">
    <property type="protein sequence ID" value="AAH19402.1"/>
    <property type="molecule type" value="mRNA"/>
</dbReference>
<dbReference type="CCDS" id="CCDS21237.1"/>
<dbReference type="RefSeq" id="NP_031671.1">
    <property type="nucleotide sequence ID" value="NM_007645.4"/>
</dbReference>
<dbReference type="SMR" id="Q61470"/>
<dbReference type="FunCoup" id="Q61470">
    <property type="interactions" value="230"/>
</dbReference>
<dbReference type="STRING" id="10090.ENSMUSP00000033063"/>
<dbReference type="GlyCosmos" id="Q61470">
    <property type="glycosylation" value="3 sites, No reported glycans"/>
</dbReference>
<dbReference type="GlyGen" id="Q61470">
    <property type="glycosylation" value="4 sites, 1 O-linked glycan (1 site)"/>
</dbReference>
<dbReference type="iPTMnet" id="Q61470"/>
<dbReference type="PhosphoSitePlus" id="Q61470"/>
<dbReference type="SwissPalm" id="Q61470"/>
<dbReference type="PaxDb" id="10090-ENSMUSP00000096061"/>
<dbReference type="ProteomicsDB" id="283748"/>
<dbReference type="ABCD" id="Q61470">
    <property type="antibodies" value="1 sequenced antibody"/>
</dbReference>
<dbReference type="Antibodypedia" id="3735">
    <property type="antibodies" value="746 antibodies from 38 providers"/>
</dbReference>
<dbReference type="DNASU" id="12493"/>
<dbReference type="Ensembl" id="ENSMUST00000098461.10">
    <property type="protein sequence ID" value="ENSMUSP00000096061.2"/>
    <property type="gene ID" value="ENSMUSG00000030798.16"/>
</dbReference>
<dbReference type="GeneID" id="12493"/>
<dbReference type="KEGG" id="mmu:12493"/>
<dbReference type="UCSC" id="uc009guh.1">
    <property type="organism name" value="mouse"/>
</dbReference>
<dbReference type="AGR" id="MGI:88330"/>
<dbReference type="CTD" id="951"/>
<dbReference type="MGI" id="MGI:88330">
    <property type="gene designation" value="Cd37"/>
</dbReference>
<dbReference type="VEuPathDB" id="HostDB:ENSMUSG00000030798"/>
<dbReference type="eggNOG" id="KOG3882">
    <property type="taxonomic scope" value="Eukaryota"/>
</dbReference>
<dbReference type="GeneTree" id="ENSGT00940000161485"/>
<dbReference type="HOGENOM" id="CLU_055524_2_0_1"/>
<dbReference type="InParanoid" id="Q61470"/>
<dbReference type="OrthoDB" id="438211at2759"/>
<dbReference type="PhylomeDB" id="Q61470"/>
<dbReference type="TreeFam" id="TF352892"/>
<dbReference type="BioGRID-ORCS" id="12493">
    <property type="hits" value="0 hits in 76 CRISPR screens"/>
</dbReference>
<dbReference type="ChiTaRS" id="Cd37">
    <property type="organism name" value="mouse"/>
</dbReference>
<dbReference type="PRO" id="PR:Q61470"/>
<dbReference type="Proteomes" id="UP000000589">
    <property type="component" value="Chromosome 7"/>
</dbReference>
<dbReference type="RNAct" id="Q61470">
    <property type="molecule type" value="protein"/>
</dbReference>
<dbReference type="Bgee" id="ENSMUSG00000030798">
    <property type="expression patterns" value="Expressed in granulocyte and 86 other cell types or tissues"/>
</dbReference>
<dbReference type="ExpressionAtlas" id="Q61470">
    <property type="expression patterns" value="baseline and differential"/>
</dbReference>
<dbReference type="GO" id="GO:0001772">
    <property type="term" value="C:immunological synapse"/>
    <property type="evidence" value="ECO:0007669"/>
    <property type="project" value="Ensembl"/>
</dbReference>
<dbReference type="GO" id="GO:0042832">
    <property type="term" value="P:defense response to protozoan"/>
    <property type="evidence" value="ECO:0000316"/>
    <property type="project" value="MGI"/>
</dbReference>
<dbReference type="GO" id="GO:0030886">
    <property type="term" value="P:negative regulation of myeloid dendritic cell activation"/>
    <property type="evidence" value="ECO:0000316"/>
    <property type="project" value="MGI"/>
</dbReference>
<dbReference type="GO" id="GO:0042130">
    <property type="term" value="P:negative regulation of T cell proliferation"/>
    <property type="evidence" value="ECO:0000316"/>
    <property type="project" value="MGI"/>
</dbReference>
<dbReference type="GO" id="GO:0002639">
    <property type="term" value="P:positive regulation of immunoglobulin production"/>
    <property type="evidence" value="ECO:0000315"/>
    <property type="project" value="MGI"/>
</dbReference>
<dbReference type="GO" id="GO:0050688">
    <property type="term" value="P:regulation of defense response to virus"/>
    <property type="evidence" value="ECO:0000316"/>
    <property type="project" value="MGI"/>
</dbReference>
<dbReference type="GO" id="GO:0002920">
    <property type="term" value="P:regulation of humoral immune response"/>
    <property type="evidence" value="ECO:0000315"/>
    <property type="project" value="MGI"/>
</dbReference>
<dbReference type="GO" id="GO:0042098">
    <property type="term" value="P:T cell proliferation"/>
    <property type="evidence" value="ECO:0000316"/>
    <property type="project" value="MGI"/>
</dbReference>
<dbReference type="CDD" id="cd03160">
    <property type="entry name" value="CD37_CD82_like_LEL"/>
    <property type="match status" value="1"/>
</dbReference>
<dbReference type="FunFam" id="1.10.1450.10:FF:000018">
    <property type="entry name" value="Tetraspanin"/>
    <property type="match status" value="1"/>
</dbReference>
<dbReference type="Gene3D" id="1.10.1450.10">
    <property type="entry name" value="Tetraspanin"/>
    <property type="match status" value="1"/>
</dbReference>
<dbReference type="InterPro" id="IPR018499">
    <property type="entry name" value="Tetraspanin/Peripherin"/>
</dbReference>
<dbReference type="InterPro" id="IPR000301">
    <property type="entry name" value="Tetraspanin_animals"/>
</dbReference>
<dbReference type="InterPro" id="IPR018503">
    <property type="entry name" value="Tetraspanin_CS"/>
</dbReference>
<dbReference type="InterPro" id="IPR008952">
    <property type="entry name" value="Tetraspanin_EC2_sf"/>
</dbReference>
<dbReference type="PANTHER" id="PTHR19282:SF263">
    <property type="entry name" value="LEUKOCYTE ANTIGEN CD37"/>
    <property type="match status" value="1"/>
</dbReference>
<dbReference type="PANTHER" id="PTHR19282">
    <property type="entry name" value="TETRASPANIN"/>
    <property type="match status" value="1"/>
</dbReference>
<dbReference type="Pfam" id="PF00335">
    <property type="entry name" value="Tetraspanin"/>
    <property type="match status" value="1"/>
</dbReference>
<dbReference type="PIRSF" id="PIRSF002419">
    <property type="entry name" value="Tetraspanin"/>
    <property type="match status" value="1"/>
</dbReference>
<dbReference type="PRINTS" id="PR00259">
    <property type="entry name" value="TMFOUR"/>
</dbReference>
<dbReference type="SUPFAM" id="SSF48652">
    <property type="entry name" value="Tetraspanin"/>
    <property type="match status" value="1"/>
</dbReference>
<dbReference type="PROSITE" id="PS00421">
    <property type="entry name" value="TM4_1"/>
    <property type="match status" value="1"/>
</dbReference>